<evidence type="ECO:0000255" key="1">
    <source>
        <dbReference type="HAMAP-Rule" id="MF_00163"/>
    </source>
</evidence>
<sequence>MALLPILEFPDPRLRTKAVRVGVAEVVSSSFQTLLDDMFETMYAAPGIGLAATQVNVHQRFMVVDVSEEKNAPMVFINPEIVTREGDQVFQEGCLSVPGIHADVTRALSIVVRFLDRHGDEQQLTAEGLLAVCIQHEMDHLDGKLFIDYLSPLKRDMVRRKLEKQRRRAS</sequence>
<gene>
    <name evidence="1" type="primary">def</name>
    <name type="ordered locus">Xfasm12_1929</name>
</gene>
<reference key="1">
    <citation type="journal article" date="2010" name="J. Bacteriol.">
        <title>Whole genome sequences of two Xylella fastidiosa strains (M12 and M23) causing almond leaf scorch disease in California.</title>
        <authorList>
            <person name="Chen J."/>
            <person name="Xie G."/>
            <person name="Han S."/>
            <person name="Chertkov O."/>
            <person name="Sims D."/>
            <person name="Civerolo E.L."/>
        </authorList>
    </citation>
    <scope>NUCLEOTIDE SEQUENCE [LARGE SCALE GENOMIC DNA]</scope>
    <source>
        <strain>M12</strain>
    </source>
</reference>
<name>DEF_XYLFM</name>
<proteinExistence type="inferred from homology"/>
<comment type="function">
    <text evidence="1">Removes the formyl group from the N-terminal Met of newly synthesized proteins. Requires at least a dipeptide for an efficient rate of reaction. N-terminal L-methionine is a prerequisite for activity but the enzyme has broad specificity at other positions.</text>
</comment>
<comment type="catalytic activity">
    <reaction evidence="1">
        <text>N-terminal N-formyl-L-methionyl-[peptide] + H2O = N-terminal L-methionyl-[peptide] + formate</text>
        <dbReference type="Rhea" id="RHEA:24420"/>
        <dbReference type="Rhea" id="RHEA-COMP:10639"/>
        <dbReference type="Rhea" id="RHEA-COMP:10640"/>
        <dbReference type="ChEBI" id="CHEBI:15377"/>
        <dbReference type="ChEBI" id="CHEBI:15740"/>
        <dbReference type="ChEBI" id="CHEBI:49298"/>
        <dbReference type="ChEBI" id="CHEBI:64731"/>
        <dbReference type="EC" id="3.5.1.88"/>
    </reaction>
</comment>
<comment type="cofactor">
    <cofactor evidence="1">
        <name>Fe(2+)</name>
        <dbReference type="ChEBI" id="CHEBI:29033"/>
    </cofactor>
    <text evidence="1">Binds 1 Fe(2+) ion.</text>
</comment>
<comment type="similarity">
    <text evidence="1">Belongs to the polypeptide deformylase family.</text>
</comment>
<feature type="chain" id="PRO_1000097362" description="Peptide deformylase">
    <location>
        <begin position="1"/>
        <end position="170"/>
    </location>
</feature>
<feature type="active site" evidence="1">
    <location>
        <position position="137"/>
    </location>
</feature>
<feature type="binding site" evidence="1">
    <location>
        <position position="94"/>
    </location>
    <ligand>
        <name>Fe cation</name>
        <dbReference type="ChEBI" id="CHEBI:24875"/>
    </ligand>
</feature>
<feature type="binding site" evidence="1">
    <location>
        <position position="136"/>
    </location>
    <ligand>
        <name>Fe cation</name>
        <dbReference type="ChEBI" id="CHEBI:24875"/>
    </ligand>
</feature>
<feature type="binding site" evidence="1">
    <location>
        <position position="140"/>
    </location>
    <ligand>
        <name>Fe cation</name>
        <dbReference type="ChEBI" id="CHEBI:24875"/>
    </ligand>
</feature>
<organism>
    <name type="scientific">Xylella fastidiosa (strain M12)</name>
    <dbReference type="NCBI Taxonomy" id="405440"/>
    <lineage>
        <taxon>Bacteria</taxon>
        <taxon>Pseudomonadati</taxon>
        <taxon>Pseudomonadota</taxon>
        <taxon>Gammaproteobacteria</taxon>
        <taxon>Lysobacterales</taxon>
        <taxon>Lysobacteraceae</taxon>
        <taxon>Xylella</taxon>
    </lineage>
</organism>
<protein>
    <recommendedName>
        <fullName evidence="1">Peptide deformylase</fullName>
        <shortName evidence="1">PDF</shortName>
        <ecNumber evidence="1">3.5.1.88</ecNumber>
    </recommendedName>
    <alternativeName>
        <fullName evidence="1">Polypeptide deformylase</fullName>
    </alternativeName>
</protein>
<dbReference type="EC" id="3.5.1.88" evidence="1"/>
<dbReference type="EMBL" id="CP000941">
    <property type="protein sequence ID" value="ACA12803.1"/>
    <property type="molecule type" value="Genomic_DNA"/>
</dbReference>
<dbReference type="RefSeq" id="WP_004086447.1">
    <property type="nucleotide sequence ID" value="NC_010513.1"/>
</dbReference>
<dbReference type="SMR" id="B0U4M4"/>
<dbReference type="KEGG" id="xfm:Xfasm12_1929"/>
<dbReference type="HOGENOM" id="CLU_061901_2_1_6"/>
<dbReference type="GO" id="GO:0046872">
    <property type="term" value="F:metal ion binding"/>
    <property type="evidence" value="ECO:0007669"/>
    <property type="project" value="UniProtKB-KW"/>
</dbReference>
<dbReference type="GO" id="GO:0042586">
    <property type="term" value="F:peptide deformylase activity"/>
    <property type="evidence" value="ECO:0007669"/>
    <property type="project" value="UniProtKB-UniRule"/>
</dbReference>
<dbReference type="GO" id="GO:0043686">
    <property type="term" value="P:co-translational protein modification"/>
    <property type="evidence" value="ECO:0007669"/>
    <property type="project" value="TreeGrafter"/>
</dbReference>
<dbReference type="GO" id="GO:0006412">
    <property type="term" value="P:translation"/>
    <property type="evidence" value="ECO:0007669"/>
    <property type="project" value="UniProtKB-UniRule"/>
</dbReference>
<dbReference type="CDD" id="cd00487">
    <property type="entry name" value="Pep_deformylase"/>
    <property type="match status" value="1"/>
</dbReference>
<dbReference type="FunFam" id="3.90.45.10:FF:000001">
    <property type="entry name" value="Peptide deformylase"/>
    <property type="match status" value="1"/>
</dbReference>
<dbReference type="Gene3D" id="3.90.45.10">
    <property type="entry name" value="Peptide deformylase"/>
    <property type="match status" value="1"/>
</dbReference>
<dbReference type="HAMAP" id="MF_00163">
    <property type="entry name" value="Pep_deformylase"/>
    <property type="match status" value="1"/>
</dbReference>
<dbReference type="InterPro" id="IPR023635">
    <property type="entry name" value="Peptide_deformylase"/>
</dbReference>
<dbReference type="InterPro" id="IPR036821">
    <property type="entry name" value="Peptide_deformylase_sf"/>
</dbReference>
<dbReference type="NCBIfam" id="TIGR00079">
    <property type="entry name" value="pept_deformyl"/>
    <property type="match status" value="1"/>
</dbReference>
<dbReference type="NCBIfam" id="NF001159">
    <property type="entry name" value="PRK00150.1-3"/>
    <property type="match status" value="1"/>
</dbReference>
<dbReference type="PANTHER" id="PTHR10458">
    <property type="entry name" value="PEPTIDE DEFORMYLASE"/>
    <property type="match status" value="1"/>
</dbReference>
<dbReference type="PANTHER" id="PTHR10458:SF21">
    <property type="entry name" value="PEPTIDE DEFORMYLASE"/>
    <property type="match status" value="1"/>
</dbReference>
<dbReference type="Pfam" id="PF01327">
    <property type="entry name" value="Pep_deformylase"/>
    <property type="match status" value="1"/>
</dbReference>
<dbReference type="PIRSF" id="PIRSF004749">
    <property type="entry name" value="Pep_def"/>
    <property type="match status" value="1"/>
</dbReference>
<dbReference type="PRINTS" id="PR01576">
    <property type="entry name" value="PDEFORMYLASE"/>
</dbReference>
<dbReference type="SUPFAM" id="SSF56420">
    <property type="entry name" value="Peptide deformylase"/>
    <property type="match status" value="1"/>
</dbReference>
<accession>B0U4M4</accession>
<keyword id="KW-0378">Hydrolase</keyword>
<keyword id="KW-0408">Iron</keyword>
<keyword id="KW-0479">Metal-binding</keyword>
<keyword id="KW-0648">Protein biosynthesis</keyword>